<proteinExistence type="evidence at protein level"/>
<gene>
    <name evidence="10" type="primary">Mnd1</name>
</gene>
<comment type="function">
    <text evidence="3 4 5 6">Required for proper homologous chromosome pairing and efficient cross-over and intragenic recombination during meiosis. Stimulates both DMC1- and RAD51-mediated homologous strand assimilation, which is required for the resolution of meiotic double-strand breaks.</text>
</comment>
<comment type="subunit">
    <text evidence="3 4">Heterodimer with PSMC3IP/HOP2. MND1-PSMC3IP interacts with DMC1 and RAD51 and binds to ssDNA and dsDNA showing no preference for either form of DNA.</text>
</comment>
<comment type="subcellular location">
    <subcellularLocation>
        <location evidence="7">Nucleus</location>
    </subcellularLocation>
</comment>
<comment type="similarity">
    <text evidence="7">Belongs to the MND1 family.</text>
</comment>
<sequence>MSKKRGLSGEEKRTRMMEIFFETKDVFQLKDLEKLAPKEKGITAMSVKEVLQSLVDDGMVDCERIGTSNYYWAFPSKALHARKRKLEALNSQLSEGSQKHADLQKSIEKARVGRQETEERAMLAKELSSFRDQRQQLKAEVEKYRECDPQVVEEIREANKVAKEAANRWTDNIFAIKSWAKRKFGFEESKIDKNFGIPEDFDYID</sequence>
<organism>
    <name type="scientific">Mus musculus</name>
    <name type="common">Mouse</name>
    <dbReference type="NCBI Taxonomy" id="10090"/>
    <lineage>
        <taxon>Eukaryota</taxon>
        <taxon>Metazoa</taxon>
        <taxon>Chordata</taxon>
        <taxon>Craniata</taxon>
        <taxon>Vertebrata</taxon>
        <taxon>Euteleostomi</taxon>
        <taxon>Mammalia</taxon>
        <taxon>Eutheria</taxon>
        <taxon>Euarchontoglires</taxon>
        <taxon>Glires</taxon>
        <taxon>Rodentia</taxon>
        <taxon>Myomorpha</taxon>
        <taxon>Muroidea</taxon>
        <taxon>Muridae</taxon>
        <taxon>Murinae</taxon>
        <taxon>Mus</taxon>
        <taxon>Mus</taxon>
    </lineage>
</organism>
<reference evidence="9" key="1">
    <citation type="journal article" date="2005" name="Science">
        <title>The transcriptional landscape of the mammalian genome.</title>
        <authorList>
            <person name="Carninci P."/>
            <person name="Kasukawa T."/>
            <person name="Katayama S."/>
            <person name="Gough J."/>
            <person name="Frith M.C."/>
            <person name="Maeda N."/>
            <person name="Oyama R."/>
            <person name="Ravasi T."/>
            <person name="Lenhard B."/>
            <person name="Wells C."/>
            <person name="Kodzius R."/>
            <person name="Shimokawa K."/>
            <person name="Bajic V.B."/>
            <person name="Brenner S.E."/>
            <person name="Batalov S."/>
            <person name="Forrest A.R."/>
            <person name="Zavolan M."/>
            <person name="Davis M.J."/>
            <person name="Wilming L.G."/>
            <person name="Aidinis V."/>
            <person name="Allen J.E."/>
            <person name="Ambesi-Impiombato A."/>
            <person name="Apweiler R."/>
            <person name="Aturaliya R.N."/>
            <person name="Bailey T.L."/>
            <person name="Bansal M."/>
            <person name="Baxter L."/>
            <person name="Beisel K.W."/>
            <person name="Bersano T."/>
            <person name="Bono H."/>
            <person name="Chalk A.M."/>
            <person name="Chiu K.P."/>
            <person name="Choudhary V."/>
            <person name="Christoffels A."/>
            <person name="Clutterbuck D.R."/>
            <person name="Crowe M.L."/>
            <person name="Dalla E."/>
            <person name="Dalrymple B.P."/>
            <person name="de Bono B."/>
            <person name="Della Gatta G."/>
            <person name="di Bernardo D."/>
            <person name="Down T."/>
            <person name="Engstrom P."/>
            <person name="Fagiolini M."/>
            <person name="Faulkner G."/>
            <person name="Fletcher C.F."/>
            <person name="Fukushima T."/>
            <person name="Furuno M."/>
            <person name="Futaki S."/>
            <person name="Gariboldi M."/>
            <person name="Georgii-Hemming P."/>
            <person name="Gingeras T.R."/>
            <person name="Gojobori T."/>
            <person name="Green R.E."/>
            <person name="Gustincich S."/>
            <person name="Harbers M."/>
            <person name="Hayashi Y."/>
            <person name="Hensch T.K."/>
            <person name="Hirokawa N."/>
            <person name="Hill D."/>
            <person name="Huminiecki L."/>
            <person name="Iacono M."/>
            <person name="Ikeo K."/>
            <person name="Iwama A."/>
            <person name="Ishikawa T."/>
            <person name="Jakt M."/>
            <person name="Kanapin A."/>
            <person name="Katoh M."/>
            <person name="Kawasawa Y."/>
            <person name="Kelso J."/>
            <person name="Kitamura H."/>
            <person name="Kitano H."/>
            <person name="Kollias G."/>
            <person name="Krishnan S.P."/>
            <person name="Kruger A."/>
            <person name="Kummerfeld S.K."/>
            <person name="Kurochkin I.V."/>
            <person name="Lareau L.F."/>
            <person name="Lazarevic D."/>
            <person name="Lipovich L."/>
            <person name="Liu J."/>
            <person name="Liuni S."/>
            <person name="McWilliam S."/>
            <person name="Madan Babu M."/>
            <person name="Madera M."/>
            <person name="Marchionni L."/>
            <person name="Matsuda H."/>
            <person name="Matsuzawa S."/>
            <person name="Miki H."/>
            <person name="Mignone F."/>
            <person name="Miyake S."/>
            <person name="Morris K."/>
            <person name="Mottagui-Tabar S."/>
            <person name="Mulder N."/>
            <person name="Nakano N."/>
            <person name="Nakauchi H."/>
            <person name="Ng P."/>
            <person name="Nilsson R."/>
            <person name="Nishiguchi S."/>
            <person name="Nishikawa S."/>
            <person name="Nori F."/>
            <person name="Ohara O."/>
            <person name="Okazaki Y."/>
            <person name="Orlando V."/>
            <person name="Pang K.C."/>
            <person name="Pavan W.J."/>
            <person name="Pavesi G."/>
            <person name="Pesole G."/>
            <person name="Petrovsky N."/>
            <person name="Piazza S."/>
            <person name="Reed J."/>
            <person name="Reid J.F."/>
            <person name="Ring B.Z."/>
            <person name="Ringwald M."/>
            <person name="Rost B."/>
            <person name="Ruan Y."/>
            <person name="Salzberg S.L."/>
            <person name="Sandelin A."/>
            <person name="Schneider C."/>
            <person name="Schoenbach C."/>
            <person name="Sekiguchi K."/>
            <person name="Semple C.A."/>
            <person name="Seno S."/>
            <person name="Sessa L."/>
            <person name="Sheng Y."/>
            <person name="Shibata Y."/>
            <person name="Shimada H."/>
            <person name="Shimada K."/>
            <person name="Silva D."/>
            <person name="Sinclair B."/>
            <person name="Sperling S."/>
            <person name="Stupka E."/>
            <person name="Sugiura K."/>
            <person name="Sultana R."/>
            <person name="Takenaka Y."/>
            <person name="Taki K."/>
            <person name="Tammoja K."/>
            <person name="Tan S.L."/>
            <person name="Tang S."/>
            <person name="Taylor M.S."/>
            <person name="Tegner J."/>
            <person name="Teichmann S.A."/>
            <person name="Ueda H.R."/>
            <person name="van Nimwegen E."/>
            <person name="Verardo R."/>
            <person name="Wei C.L."/>
            <person name="Yagi K."/>
            <person name="Yamanishi H."/>
            <person name="Zabarovsky E."/>
            <person name="Zhu S."/>
            <person name="Zimmer A."/>
            <person name="Hide W."/>
            <person name="Bult C."/>
            <person name="Grimmond S.M."/>
            <person name="Teasdale R.D."/>
            <person name="Liu E.T."/>
            <person name="Brusic V."/>
            <person name="Quackenbush J."/>
            <person name="Wahlestedt C."/>
            <person name="Mattick J.S."/>
            <person name="Hume D.A."/>
            <person name="Kai C."/>
            <person name="Sasaki D."/>
            <person name="Tomaru Y."/>
            <person name="Fukuda S."/>
            <person name="Kanamori-Katayama M."/>
            <person name="Suzuki M."/>
            <person name="Aoki J."/>
            <person name="Arakawa T."/>
            <person name="Iida J."/>
            <person name="Imamura K."/>
            <person name="Itoh M."/>
            <person name="Kato T."/>
            <person name="Kawaji H."/>
            <person name="Kawagashira N."/>
            <person name="Kawashima T."/>
            <person name="Kojima M."/>
            <person name="Kondo S."/>
            <person name="Konno H."/>
            <person name="Nakano K."/>
            <person name="Ninomiya N."/>
            <person name="Nishio T."/>
            <person name="Okada M."/>
            <person name="Plessy C."/>
            <person name="Shibata K."/>
            <person name="Shiraki T."/>
            <person name="Suzuki S."/>
            <person name="Tagami M."/>
            <person name="Waki K."/>
            <person name="Watahiki A."/>
            <person name="Okamura-Oho Y."/>
            <person name="Suzuki H."/>
            <person name="Kawai J."/>
            <person name="Hayashizaki Y."/>
        </authorList>
    </citation>
    <scope>NUCLEOTIDE SEQUENCE [LARGE SCALE MRNA]</scope>
    <source>
        <strain evidence="9">C57BL/6J</strain>
        <tissue evidence="9">Embryo</tissue>
    </source>
</reference>
<reference evidence="8" key="2">
    <citation type="journal article" date="2004" name="Genome Res.">
        <title>The status, quality, and expansion of the NIH full-length cDNA project: the Mammalian Gene Collection (MGC).</title>
        <authorList>
            <consortium name="The MGC Project Team"/>
        </authorList>
    </citation>
    <scope>NUCLEOTIDE SEQUENCE [LARGE SCALE MRNA]</scope>
    <source>
        <strain evidence="8">Czech II</strain>
        <tissue evidence="8">Mammary tumor</tissue>
    </source>
</reference>
<reference evidence="7" key="3">
    <citation type="journal article" date="2005" name="Nat. Struct. Mol. Biol.">
        <title>The Hop2 and Mnd1 proteins act in concert with Rad51 and Dmc1 in meiotic recombination.</title>
        <authorList>
            <person name="Petukhova G.V."/>
            <person name="Pezza R.J."/>
            <person name="Vanevski F."/>
            <person name="Ploquin M."/>
            <person name="Masson J.-Y."/>
            <person name="Camerini-Otero R.D."/>
        </authorList>
    </citation>
    <scope>FUNCTION</scope>
    <scope>INTERACTION WITH DMC1; PSMC3IP AND RAD51</scope>
</reference>
<reference evidence="7" key="4">
    <citation type="journal article" date="2006" name="J. Biol. Chem.">
        <title>Molecular activities of meiosis-specific proteins Hop2, Mnd1, and the Hop2-Mnd1 complex.</title>
        <authorList>
            <person name="Pezza R.J."/>
            <person name="Petukhova G.V."/>
            <person name="Ghirlando R."/>
            <person name="Camerini-Otero R.D."/>
        </authorList>
    </citation>
    <scope>FUNCTION</scope>
    <scope>INTERACTION WITH PSMC3IP</scope>
</reference>
<reference evidence="7" key="5">
    <citation type="journal article" date="2007" name="Genes Dev.">
        <title>Hop2/Mnd1 acts on two critical steps in Dmc1-promoted homologous pairing.</title>
        <authorList>
            <person name="Pezza R.J."/>
            <person name="Voloshin O.N."/>
            <person name="Vanevski F."/>
            <person name="Camerini-Otero R.D."/>
        </authorList>
    </citation>
    <scope>FUNCTION</scope>
</reference>
<reference evidence="7" key="6">
    <citation type="journal article" date="2007" name="Nucleic Acids Res.">
        <title>Stimulation of fission yeast and mouse Hop2-Mnd1 of the Dmc1 and Rad51 recombinases.</title>
        <authorList>
            <person name="Ploquin M."/>
            <person name="Petukhova G.V."/>
            <person name="Morneau D."/>
            <person name="Dery U."/>
            <person name="Bransi A."/>
            <person name="Stasiak A."/>
            <person name="Camerini-Otero R.D."/>
            <person name="Masson J.-Y."/>
        </authorList>
    </citation>
    <scope>FUNCTION</scope>
</reference>
<reference key="7">
    <citation type="journal article" date="2010" name="Cell">
        <title>A tissue-specific atlas of mouse protein phosphorylation and expression.</title>
        <authorList>
            <person name="Huttlin E.L."/>
            <person name="Jedrychowski M.P."/>
            <person name="Elias J.E."/>
            <person name="Goswami T."/>
            <person name="Rad R."/>
            <person name="Beausoleil S.A."/>
            <person name="Villen J."/>
            <person name="Haas W."/>
            <person name="Sowa M.E."/>
            <person name="Gygi S.P."/>
        </authorList>
    </citation>
    <scope>IDENTIFICATION BY MASS SPECTROMETRY [LARGE SCALE ANALYSIS]</scope>
    <source>
        <tissue>Testis</tissue>
    </source>
</reference>
<accession>Q8K396</accession>
<accession>Q9D0A1</accession>
<evidence type="ECO:0000250" key="1">
    <source>
        <dbReference type="UniProtKB" id="Q9BWT6"/>
    </source>
</evidence>
<evidence type="ECO:0000255" key="2"/>
<evidence type="ECO:0000269" key="3">
    <source>
    </source>
</evidence>
<evidence type="ECO:0000269" key="4">
    <source>
    </source>
</evidence>
<evidence type="ECO:0000269" key="5">
    <source>
    </source>
</evidence>
<evidence type="ECO:0000269" key="6">
    <source>
    </source>
</evidence>
<evidence type="ECO:0000305" key="7"/>
<evidence type="ECO:0000312" key="8">
    <source>
        <dbReference type="EMBL" id="AAH27741.1"/>
    </source>
</evidence>
<evidence type="ECO:0000312" key="9">
    <source>
        <dbReference type="EMBL" id="BAB27765.1"/>
    </source>
</evidence>
<evidence type="ECO:0000312" key="10">
    <source>
        <dbReference type="MGI" id="MGI:1924165"/>
    </source>
</evidence>
<feature type="initiator methionine" description="Removed" evidence="1">
    <location>
        <position position="1"/>
    </location>
</feature>
<feature type="chain" id="PRO_0000318082" description="Meiotic nuclear division protein 1 homolog">
    <location>
        <begin position="2"/>
        <end position="205"/>
    </location>
</feature>
<feature type="coiled-coil region" evidence="2">
    <location>
        <begin position="83"/>
        <end position="173"/>
    </location>
</feature>
<feature type="modified residue" description="N-acetylserine" evidence="1">
    <location>
        <position position="2"/>
    </location>
</feature>
<feature type="sequence conflict" description="In Ref. 1; BAB27765." evidence="7" ref="1">
    <original>S</original>
    <variation>F</variation>
    <location>
        <position position="128"/>
    </location>
</feature>
<dbReference type="EMBL" id="AK011664">
    <property type="protein sequence ID" value="BAB27765.1"/>
    <property type="molecule type" value="mRNA"/>
</dbReference>
<dbReference type="EMBL" id="BC027741">
    <property type="protein sequence ID" value="AAH27741.1"/>
    <property type="molecule type" value="mRNA"/>
</dbReference>
<dbReference type="CCDS" id="CCDS38464.1"/>
<dbReference type="RefSeq" id="NP_084073.2">
    <property type="nucleotide sequence ID" value="NM_029797.4"/>
</dbReference>
<dbReference type="SMR" id="Q8K396"/>
<dbReference type="BioGRID" id="218391">
    <property type="interactions" value="2"/>
</dbReference>
<dbReference type="CORUM" id="Q8K396"/>
<dbReference type="FunCoup" id="Q8K396">
    <property type="interactions" value="637"/>
</dbReference>
<dbReference type="IntAct" id="Q8K396">
    <property type="interactions" value="1"/>
</dbReference>
<dbReference type="MINT" id="Q8K396"/>
<dbReference type="STRING" id="10090.ENSMUSP00000048262"/>
<dbReference type="iPTMnet" id="Q8K396"/>
<dbReference type="PhosphoSitePlus" id="Q8K396"/>
<dbReference type="PaxDb" id="10090-ENSMUSP00000048262"/>
<dbReference type="PeptideAtlas" id="Q8K396"/>
<dbReference type="ProteomicsDB" id="295696"/>
<dbReference type="Pumba" id="Q8K396"/>
<dbReference type="Antibodypedia" id="27871">
    <property type="antibodies" value="157 antibodies from 21 providers"/>
</dbReference>
<dbReference type="Ensembl" id="ENSMUST00000047368.8">
    <property type="protein sequence ID" value="ENSMUSP00000048262.7"/>
    <property type="gene ID" value="ENSMUSG00000033752.8"/>
</dbReference>
<dbReference type="GeneID" id="76915"/>
<dbReference type="KEGG" id="mmu:76915"/>
<dbReference type="UCSC" id="uc008ppv.2">
    <property type="organism name" value="mouse"/>
</dbReference>
<dbReference type="AGR" id="MGI:1924165"/>
<dbReference type="CTD" id="84057"/>
<dbReference type="MGI" id="MGI:1924165">
    <property type="gene designation" value="Mnd1"/>
</dbReference>
<dbReference type="VEuPathDB" id="HostDB:ENSMUSG00000033752"/>
<dbReference type="eggNOG" id="KOG3433">
    <property type="taxonomic scope" value="Eukaryota"/>
</dbReference>
<dbReference type="GeneTree" id="ENSGT00490000043413"/>
<dbReference type="HOGENOM" id="CLU_080628_3_1_1"/>
<dbReference type="InParanoid" id="Q8K396"/>
<dbReference type="OMA" id="VCYWAFP"/>
<dbReference type="OrthoDB" id="273345at2759"/>
<dbReference type="PhylomeDB" id="Q8K396"/>
<dbReference type="TreeFam" id="TF314068"/>
<dbReference type="BioGRID-ORCS" id="76915">
    <property type="hits" value="0 hits in 78 CRISPR screens"/>
</dbReference>
<dbReference type="ChiTaRS" id="Mnd1">
    <property type="organism name" value="mouse"/>
</dbReference>
<dbReference type="PRO" id="PR:Q8K396"/>
<dbReference type="Proteomes" id="UP000000589">
    <property type="component" value="Chromosome 3"/>
</dbReference>
<dbReference type="RNAct" id="Q8K396">
    <property type="molecule type" value="protein"/>
</dbReference>
<dbReference type="Bgee" id="ENSMUSG00000033752">
    <property type="expression patterns" value="Expressed in primary oocyte and 68 other cell types or tissues"/>
</dbReference>
<dbReference type="GO" id="GO:0005634">
    <property type="term" value="C:nucleus"/>
    <property type="evidence" value="ECO:0007669"/>
    <property type="project" value="UniProtKB-SubCell"/>
</dbReference>
<dbReference type="GO" id="GO:0003690">
    <property type="term" value="F:double-stranded DNA binding"/>
    <property type="evidence" value="ECO:0007669"/>
    <property type="project" value="InterPro"/>
</dbReference>
<dbReference type="GO" id="GO:0007129">
    <property type="term" value="P:homologous chromosome pairing at meiosis"/>
    <property type="evidence" value="ECO:0007669"/>
    <property type="project" value="Ensembl"/>
</dbReference>
<dbReference type="GO" id="GO:0007131">
    <property type="term" value="P:reciprocal meiotic recombination"/>
    <property type="evidence" value="ECO:0007669"/>
    <property type="project" value="Ensembl"/>
</dbReference>
<dbReference type="InterPro" id="IPR040661">
    <property type="entry name" value="LZ3wCH"/>
</dbReference>
<dbReference type="InterPro" id="IPR005647">
    <property type="entry name" value="Mnd1"/>
</dbReference>
<dbReference type="InterPro" id="IPR040453">
    <property type="entry name" value="Mnd1_HTH"/>
</dbReference>
<dbReference type="InterPro" id="IPR036390">
    <property type="entry name" value="WH_DNA-bd_sf"/>
</dbReference>
<dbReference type="PANTHER" id="PTHR31398">
    <property type="entry name" value="MEIOTIC NUCLEAR DIVISION PROTEIN 1 HOMOLOG"/>
    <property type="match status" value="1"/>
</dbReference>
<dbReference type="PANTHER" id="PTHR31398:SF0">
    <property type="entry name" value="MEIOTIC NUCLEAR DIVISION PROTEIN 1 HOMOLOG"/>
    <property type="match status" value="1"/>
</dbReference>
<dbReference type="Pfam" id="PF18517">
    <property type="entry name" value="LZ3wCH"/>
    <property type="match status" value="1"/>
</dbReference>
<dbReference type="Pfam" id="PF03962">
    <property type="entry name" value="Mnd1"/>
    <property type="match status" value="1"/>
</dbReference>
<dbReference type="PIRSF" id="PIRSF026991">
    <property type="entry name" value="Mnd1"/>
    <property type="match status" value="1"/>
</dbReference>
<dbReference type="SUPFAM" id="SSF46785">
    <property type="entry name" value="Winged helix' DNA-binding domain"/>
    <property type="match status" value="1"/>
</dbReference>
<keyword id="KW-0007">Acetylation</keyword>
<keyword id="KW-0175">Coiled coil</keyword>
<keyword id="KW-0233">DNA recombination</keyword>
<keyword id="KW-0238">DNA-binding</keyword>
<keyword id="KW-0469">Meiosis</keyword>
<keyword id="KW-0539">Nucleus</keyword>
<keyword id="KW-1185">Reference proteome</keyword>
<name>MND1_MOUSE</name>
<protein>
    <recommendedName>
        <fullName>Meiotic nuclear division protein 1 homolog</fullName>
    </recommendedName>
</protein>